<comment type="function">
    <text evidence="1">Catalyzes a salvage reaction resulting in the formation of AMP, that is energically less costly than de novo synthesis.</text>
</comment>
<comment type="catalytic activity">
    <reaction evidence="1">
        <text>AMP + diphosphate = 5-phospho-alpha-D-ribose 1-diphosphate + adenine</text>
        <dbReference type="Rhea" id="RHEA:16609"/>
        <dbReference type="ChEBI" id="CHEBI:16708"/>
        <dbReference type="ChEBI" id="CHEBI:33019"/>
        <dbReference type="ChEBI" id="CHEBI:58017"/>
        <dbReference type="ChEBI" id="CHEBI:456215"/>
        <dbReference type="EC" id="2.4.2.7"/>
    </reaction>
</comment>
<comment type="pathway">
    <text evidence="1">Purine metabolism; AMP biosynthesis via salvage pathway; AMP from adenine: step 1/1.</text>
</comment>
<comment type="subunit">
    <text evidence="1">Homodimer.</text>
</comment>
<comment type="subcellular location">
    <subcellularLocation>
        <location evidence="1">Cytoplasm</location>
    </subcellularLocation>
</comment>
<comment type="similarity">
    <text evidence="1">Belongs to the purine/pyrimidine phosphoribosyltransferase family.</text>
</comment>
<name>APT_CHESB</name>
<reference key="1">
    <citation type="submission" date="2006-06" db="EMBL/GenBank/DDBJ databases">
        <title>Complete sequence of chromosome of Mesorhizobium sp. BNC1.</title>
        <authorList>
            <consortium name="US DOE Joint Genome Institute"/>
            <person name="Copeland A."/>
            <person name="Lucas S."/>
            <person name="Lapidus A."/>
            <person name="Barry K."/>
            <person name="Detter J.C."/>
            <person name="Glavina del Rio T."/>
            <person name="Hammon N."/>
            <person name="Israni S."/>
            <person name="Dalin E."/>
            <person name="Tice H."/>
            <person name="Pitluck S."/>
            <person name="Chertkov O."/>
            <person name="Brettin T."/>
            <person name="Bruce D."/>
            <person name="Han C."/>
            <person name="Tapia R."/>
            <person name="Gilna P."/>
            <person name="Schmutz J."/>
            <person name="Larimer F."/>
            <person name="Land M."/>
            <person name="Hauser L."/>
            <person name="Kyrpides N."/>
            <person name="Mikhailova N."/>
            <person name="Richardson P."/>
        </authorList>
    </citation>
    <scope>NUCLEOTIDE SEQUENCE [LARGE SCALE GENOMIC DNA]</scope>
    <source>
        <strain>BNC1</strain>
    </source>
</reference>
<organism>
    <name type="scientific">Chelativorans sp. (strain BNC1)</name>
    <dbReference type="NCBI Taxonomy" id="266779"/>
    <lineage>
        <taxon>Bacteria</taxon>
        <taxon>Pseudomonadati</taxon>
        <taxon>Pseudomonadota</taxon>
        <taxon>Alphaproteobacteria</taxon>
        <taxon>Hyphomicrobiales</taxon>
        <taxon>Phyllobacteriaceae</taxon>
        <taxon>Chelativorans</taxon>
    </lineage>
</organism>
<dbReference type="EC" id="2.4.2.7" evidence="1"/>
<dbReference type="EMBL" id="CP000390">
    <property type="protein sequence ID" value="ABG63555.1"/>
    <property type="molecule type" value="Genomic_DNA"/>
</dbReference>
<dbReference type="SMR" id="Q11GC0"/>
<dbReference type="STRING" id="266779.Meso_2163"/>
<dbReference type="KEGG" id="mes:Meso_2163"/>
<dbReference type="eggNOG" id="COG0503">
    <property type="taxonomic scope" value="Bacteria"/>
</dbReference>
<dbReference type="HOGENOM" id="CLU_063339_3_0_5"/>
<dbReference type="OrthoDB" id="9803963at2"/>
<dbReference type="UniPathway" id="UPA00588">
    <property type="reaction ID" value="UER00646"/>
</dbReference>
<dbReference type="GO" id="GO:0005737">
    <property type="term" value="C:cytoplasm"/>
    <property type="evidence" value="ECO:0007669"/>
    <property type="project" value="UniProtKB-SubCell"/>
</dbReference>
<dbReference type="GO" id="GO:0003999">
    <property type="term" value="F:adenine phosphoribosyltransferase activity"/>
    <property type="evidence" value="ECO:0007669"/>
    <property type="project" value="UniProtKB-UniRule"/>
</dbReference>
<dbReference type="GO" id="GO:0006168">
    <property type="term" value="P:adenine salvage"/>
    <property type="evidence" value="ECO:0007669"/>
    <property type="project" value="InterPro"/>
</dbReference>
<dbReference type="GO" id="GO:0044209">
    <property type="term" value="P:AMP salvage"/>
    <property type="evidence" value="ECO:0007669"/>
    <property type="project" value="UniProtKB-UniRule"/>
</dbReference>
<dbReference type="GO" id="GO:0006166">
    <property type="term" value="P:purine ribonucleoside salvage"/>
    <property type="evidence" value="ECO:0007669"/>
    <property type="project" value="UniProtKB-KW"/>
</dbReference>
<dbReference type="CDD" id="cd06223">
    <property type="entry name" value="PRTases_typeI"/>
    <property type="match status" value="1"/>
</dbReference>
<dbReference type="FunFam" id="3.40.50.2020:FF:000021">
    <property type="entry name" value="Adenine phosphoribosyltransferase"/>
    <property type="match status" value="1"/>
</dbReference>
<dbReference type="Gene3D" id="3.40.50.2020">
    <property type="match status" value="1"/>
</dbReference>
<dbReference type="HAMAP" id="MF_00004">
    <property type="entry name" value="Aden_phosphoribosyltr"/>
    <property type="match status" value="1"/>
</dbReference>
<dbReference type="InterPro" id="IPR005764">
    <property type="entry name" value="Ade_phspho_trans"/>
</dbReference>
<dbReference type="InterPro" id="IPR050120">
    <property type="entry name" value="Adenine_PRTase"/>
</dbReference>
<dbReference type="InterPro" id="IPR000836">
    <property type="entry name" value="PRibTrfase_dom"/>
</dbReference>
<dbReference type="InterPro" id="IPR029057">
    <property type="entry name" value="PRTase-like"/>
</dbReference>
<dbReference type="NCBIfam" id="TIGR01090">
    <property type="entry name" value="apt"/>
    <property type="match status" value="1"/>
</dbReference>
<dbReference type="NCBIfam" id="NF002634">
    <property type="entry name" value="PRK02304.1-3"/>
    <property type="match status" value="1"/>
</dbReference>
<dbReference type="NCBIfam" id="NF002636">
    <property type="entry name" value="PRK02304.1-5"/>
    <property type="match status" value="1"/>
</dbReference>
<dbReference type="PANTHER" id="PTHR11776">
    <property type="entry name" value="ADENINE PHOSPHORIBOSYLTRANSFERASE"/>
    <property type="match status" value="1"/>
</dbReference>
<dbReference type="PANTHER" id="PTHR11776:SF7">
    <property type="entry name" value="PHOSPHORIBOSYLTRANSFERASE DOMAIN-CONTAINING PROTEIN"/>
    <property type="match status" value="1"/>
</dbReference>
<dbReference type="Pfam" id="PF00156">
    <property type="entry name" value="Pribosyltran"/>
    <property type="match status" value="1"/>
</dbReference>
<dbReference type="SUPFAM" id="SSF53271">
    <property type="entry name" value="PRTase-like"/>
    <property type="match status" value="1"/>
</dbReference>
<dbReference type="PROSITE" id="PS00103">
    <property type="entry name" value="PUR_PYR_PR_TRANSFER"/>
    <property type="match status" value="1"/>
</dbReference>
<protein>
    <recommendedName>
        <fullName evidence="1">Adenine phosphoribosyltransferase</fullName>
        <shortName evidence="1">APRT</shortName>
        <ecNumber evidence="1">2.4.2.7</ecNumber>
    </recommendedName>
</protein>
<proteinExistence type="inferred from homology"/>
<keyword id="KW-0963">Cytoplasm</keyword>
<keyword id="KW-0328">Glycosyltransferase</keyword>
<keyword id="KW-0660">Purine salvage</keyword>
<keyword id="KW-0808">Transferase</keyword>
<gene>
    <name evidence="1" type="primary">apt</name>
    <name type="ordered locus">Meso_2163</name>
</gene>
<sequence length="181" mass="19544">MKQSLEDTLLAAIRTIPDYPRPGILFRDITTLLGDARAFRRAVDELVHPYAGAKIDKIAGIEARGFILGGAIAHQLSSGFIPIRKKGKLPHETVRVAYSLEYGLDEMEMHIDAVSPGEKVILVDDLIATGGTAEAAVRLLRQMGAEIVAACFVIDLPDLGGRAKLEAEGVDVRTLVSFEGH</sequence>
<feature type="chain" id="PRO_1000000305" description="Adenine phosphoribosyltransferase">
    <location>
        <begin position="1"/>
        <end position="181"/>
    </location>
</feature>
<accession>Q11GC0</accession>
<evidence type="ECO:0000255" key="1">
    <source>
        <dbReference type="HAMAP-Rule" id="MF_00004"/>
    </source>
</evidence>